<comment type="function">
    <text evidence="1">May act as a negative regulator of osteoclast differentiation.</text>
</comment>
<comment type="subcellular location">
    <subcellularLocation>
        <location evidence="1">Endoplasmic reticulum membrane</location>
        <topology evidence="2">Multi-pass membrane protein</topology>
    </subcellularLocation>
</comment>
<comment type="similarity">
    <text evidence="3">Belongs to the TMEM178 family.</text>
</comment>
<dbReference type="EMBL" id="BC124270">
    <property type="protein sequence ID" value="AAI24271.1"/>
    <property type="molecule type" value="mRNA"/>
</dbReference>
<dbReference type="RefSeq" id="NP_001070108.1">
    <property type="nucleotide sequence ID" value="NM_001076640.1"/>
</dbReference>
<dbReference type="FunCoup" id="Q08CE6">
    <property type="interactions" value="208"/>
</dbReference>
<dbReference type="STRING" id="7955.ENSDARP00000027372"/>
<dbReference type="GlyCosmos" id="Q08CE6">
    <property type="glycosylation" value="1 site, No reported glycans"/>
</dbReference>
<dbReference type="PaxDb" id="7955-ENSDARP00000027372"/>
<dbReference type="GeneID" id="767702"/>
<dbReference type="KEGG" id="dre:767702"/>
<dbReference type="AGR" id="ZFIN:ZDB-GENE-060929-756"/>
<dbReference type="CTD" id="130733"/>
<dbReference type="ZFIN" id="ZDB-GENE-060929-756">
    <property type="gene designation" value="tmem178a"/>
</dbReference>
<dbReference type="eggNOG" id="ENOG502R2WV">
    <property type="taxonomic scope" value="Eukaryota"/>
</dbReference>
<dbReference type="InParanoid" id="Q08CE6"/>
<dbReference type="OrthoDB" id="9941453at2759"/>
<dbReference type="PhylomeDB" id="Q08CE6"/>
<dbReference type="PRO" id="PR:Q08CE6"/>
<dbReference type="Proteomes" id="UP000000437">
    <property type="component" value="Chromosome 11"/>
</dbReference>
<dbReference type="GO" id="GO:0005789">
    <property type="term" value="C:endoplasmic reticulum membrane"/>
    <property type="evidence" value="ECO:0000250"/>
    <property type="project" value="UniProtKB"/>
</dbReference>
<dbReference type="GO" id="GO:0045671">
    <property type="term" value="P:negative regulation of osteoclast differentiation"/>
    <property type="evidence" value="ECO:0000250"/>
    <property type="project" value="UniProtKB"/>
</dbReference>
<dbReference type="GO" id="GO:0051480">
    <property type="term" value="P:regulation of cytosolic calcium ion concentration"/>
    <property type="evidence" value="ECO:0000318"/>
    <property type="project" value="GO_Central"/>
</dbReference>
<dbReference type="FunFam" id="1.20.140.150:FF:000024">
    <property type="entry name" value="Transmembrane protein 178A"/>
    <property type="match status" value="1"/>
</dbReference>
<dbReference type="Gene3D" id="1.20.140.150">
    <property type="match status" value="1"/>
</dbReference>
<dbReference type="InterPro" id="IPR004031">
    <property type="entry name" value="PMP22/EMP/MP20/Claudin"/>
</dbReference>
<dbReference type="InterPro" id="IPR039625">
    <property type="entry name" value="T178A/B"/>
</dbReference>
<dbReference type="PANTHER" id="PTHR32005:SF4">
    <property type="entry name" value="TRANSMEMBRANE PROTEIN 178A"/>
    <property type="match status" value="1"/>
</dbReference>
<dbReference type="PANTHER" id="PTHR32005">
    <property type="entry name" value="TRANSMEMBRANE PROTEIN 178B-RELATED"/>
    <property type="match status" value="1"/>
</dbReference>
<dbReference type="Pfam" id="PF13903">
    <property type="entry name" value="Claudin_2"/>
    <property type="match status" value="1"/>
</dbReference>
<sequence>MEKRALVTAISLSMSLLALMLLVTAIFTDHWYETDTRRHKENCDQYGSESNDQKNREMPIYHLPLVDSGNAKRNLALMKPIHVGSREEELLENWRAILGMGILETECGRPLFSTYSGLWRKCYFQGMDRDIDKLILKGIAERCTSVKYHFSQPIRLRNIPLNLTRTIQQDEWHLLHLRRITAGFLGMAAAVMLCGSIVAAVGFFWEESLTQHVSGLLFLMAGIFCTISLCTYAASVSYDLSRNPPFIYGLPSDVDHGYGWSIFCAWVSLGLTVASGCICTTYPFLSRTKALRSKTARESSV</sequence>
<evidence type="ECO:0000250" key="1">
    <source>
        <dbReference type="UniProtKB" id="Q9CZ16"/>
    </source>
</evidence>
<evidence type="ECO:0000255" key="2"/>
<evidence type="ECO:0000305" key="3"/>
<protein>
    <recommendedName>
        <fullName>Transmembrane protein 178A</fullName>
    </recommendedName>
</protein>
<gene>
    <name type="primary">tmem178a</name>
    <name type="synonym">tmem178</name>
    <name type="ORF">zgc:153181</name>
</gene>
<keyword id="KW-0256">Endoplasmic reticulum</keyword>
<keyword id="KW-0325">Glycoprotein</keyword>
<keyword id="KW-0472">Membrane</keyword>
<keyword id="KW-1185">Reference proteome</keyword>
<keyword id="KW-0732">Signal</keyword>
<keyword id="KW-0812">Transmembrane</keyword>
<keyword id="KW-1133">Transmembrane helix</keyword>
<name>T178A_DANRE</name>
<organism>
    <name type="scientific">Danio rerio</name>
    <name type="common">Zebrafish</name>
    <name type="synonym">Brachydanio rerio</name>
    <dbReference type="NCBI Taxonomy" id="7955"/>
    <lineage>
        <taxon>Eukaryota</taxon>
        <taxon>Metazoa</taxon>
        <taxon>Chordata</taxon>
        <taxon>Craniata</taxon>
        <taxon>Vertebrata</taxon>
        <taxon>Euteleostomi</taxon>
        <taxon>Actinopterygii</taxon>
        <taxon>Neopterygii</taxon>
        <taxon>Teleostei</taxon>
        <taxon>Ostariophysi</taxon>
        <taxon>Cypriniformes</taxon>
        <taxon>Danionidae</taxon>
        <taxon>Danioninae</taxon>
        <taxon>Danio</taxon>
    </lineage>
</organism>
<feature type="signal peptide" evidence="2">
    <location>
        <begin position="1"/>
        <end position="25"/>
    </location>
</feature>
<feature type="chain" id="PRO_0000287283" description="Transmembrane protein 178A">
    <location>
        <begin position="26"/>
        <end position="301"/>
    </location>
</feature>
<feature type="topological domain" description="Extracellular" evidence="2">
    <location>
        <begin position="26"/>
        <end position="183"/>
    </location>
</feature>
<feature type="transmembrane region" description="Helical" evidence="2">
    <location>
        <begin position="184"/>
        <end position="204"/>
    </location>
</feature>
<feature type="topological domain" description="Cytoplasmic" evidence="2">
    <location>
        <begin position="205"/>
        <end position="215"/>
    </location>
</feature>
<feature type="transmembrane region" description="Helical" evidence="2">
    <location>
        <begin position="216"/>
        <end position="236"/>
    </location>
</feature>
<feature type="topological domain" description="Extracellular" evidence="2">
    <location>
        <begin position="237"/>
        <end position="258"/>
    </location>
</feature>
<feature type="transmembrane region" description="Helical" evidence="2">
    <location>
        <begin position="259"/>
        <end position="279"/>
    </location>
</feature>
<feature type="topological domain" description="Cytoplasmic" evidence="2">
    <location>
        <begin position="280"/>
        <end position="301"/>
    </location>
</feature>
<feature type="glycosylation site" description="N-linked (GlcNAc...) asparagine" evidence="2">
    <location>
        <position position="162"/>
    </location>
</feature>
<accession>Q08CE6</accession>
<proteinExistence type="evidence at transcript level"/>
<reference key="1">
    <citation type="submission" date="2006-09" db="EMBL/GenBank/DDBJ databases">
        <authorList>
            <consortium name="NIH - Zebrafish Gene Collection (ZGC) project"/>
        </authorList>
    </citation>
    <scope>NUCLEOTIDE SEQUENCE [LARGE SCALE MRNA]</scope>
    <source>
        <tissue>Heart</tissue>
    </source>
</reference>